<proteinExistence type="inferred from homology"/>
<dbReference type="EC" id="2.1.3.15" evidence="1"/>
<dbReference type="EMBL" id="AM889285">
    <property type="protein sequence ID" value="CAP55196.1"/>
    <property type="status" value="ALT_INIT"/>
    <property type="molecule type" value="Genomic_DNA"/>
</dbReference>
<dbReference type="EMBL" id="CP001189">
    <property type="protein sequence ID" value="ACI51724.1"/>
    <property type="molecule type" value="Genomic_DNA"/>
</dbReference>
<dbReference type="RefSeq" id="WP_012554061.1">
    <property type="nucleotide sequence ID" value="NC_010125.1"/>
</dbReference>
<dbReference type="SMR" id="A9HE81"/>
<dbReference type="STRING" id="272568.GDI1253"/>
<dbReference type="KEGG" id="gdi:GDI1253"/>
<dbReference type="KEGG" id="gdj:Gdia_1964"/>
<dbReference type="eggNOG" id="COG0777">
    <property type="taxonomic scope" value="Bacteria"/>
</dbReference>
<dbReference type="HOGENOM" id="CLU_015486_1_1_5"/>
<dbReference type="OrthoDB" id="9772975at2"/>
<dbReference type="UniPathway" id="UPA00655">
    <property type="reaction ID" value="UER00711"/>
</dbReference>
<dbReference type="Proteomes" id="UP000001176">
    <property type="component" value="Chromosome"/>
</dbReference>
<dbReference type="GO" id="GO:0009329">
    <property type="term" value="C:acetate CoA-transferase complex"/>
    <property type="evidence" value="ECO:0007669"/>
    <property type="project" value="TreeGrafter"/>
</dbReference>
<dbReference type="GO" id="GO:0003989">
    <property type="term" value="F:acetyl-CoA carboxylase activity"/>
    <property type="evidence" value="ECO:0007669"/>
    <property type="project" value="InterPro"/>
</dbReference>
<dbReference type="GO" id="GO:0005524">
    <property type="term" value="F:ATP binding"/>
    <property type="evidence" value="ECO:0007669"/>
    <property type="project" value="UniProtKB-KW"/>
</dbReference>
<dbReference type="GO" id="GO:0016743">
    <property type="term" value="F:carboxyl- or carbamoyltransferase activity"/>
    <property type="evidence" value="ECO:0007669"/>
    <property type="project" value="UniProtKB-UniRule"/>
</dbReference>
<dbReference type="GO" id="GO:0008270">
    <property type="term" value="F:zinc ion binding"/>
    <property type="evidence" value="ECO:0007669"/>
    <property type="project" value="UniProtKB-UniRule"/>
</dbReference>
<dbReference type="GO" id="GO:0006633">
    <property type="term" value="P:fatty acid biosynthetic process"/>
    <property type="evidence" value="ECO:0007669"/>
    <property type="project" value="UniProtKB-KW"/>
</dbReference>
<dbReference type="GO" id="GO:2001295">
    <property type="term" value="P:malonyl-CoA biosynthetic process"/>
    <property type="evidence" value="ECO:0007669"/>
    <property type="project" value="UniProtKB-UniRule"/>
</dbReference>
<dbReference type="Gene3D" id="3.90.226.10">
    <property type="entry name" value="2-enoyl-CoA Hydratase, Chain A, domain 1"/>
    <property type="match status" value="1"/>
</dbReference>
<dbReference type="HAMAP" id="MF_01395">
    <property type="entry name" value="AcetylCoA_CT_beta"/>
    <property type="match status" value="1"/>
</dbReference>
<dbReference type="InterPro" id="IPR034733">
    <property type="entry name" value="AcCoA_carboxyl_beta"/>
</dbReference>
<dbReference type="InterPro" id="IPR000438">
    <property type="entry name" value="Acetyl_CoA_COase_Trfase_b_su"/>
</dbReference>
<dbReference type="InterPro" id="IPR029045">
    <property type="entry name" value="ClpP/crotonase-like_dom_sf"/>
</dbReference>
<dbReference type="InterPro" id="IPR011762">
    <property type="entry name" value="COA_CT_N"/>
</dbReference>
<dbReference type="InterPro" id="IPR041010">
    <property type="entry name" value="Znf-ACC"/>
</dbReference>
<dbReference type="NCBIfam" id="TIGR00515">
    <property type="entry name" value="accD"/>
    <property type="match status" value="1"/>
</dbReference>
<dbReference type="PANTHER" id="PTHR42995">
    <property type="entry name" value="ACETYL-COENZYME A CARBOXYLASE CARBOXYL TRANSFERASE SUBUNIT BETA, CHLOROPLASTIC"/>
    <property type="match status" value="1"/>
</dbReference>
<dbReference type="PANTHER" id="PTHR42995:SF5">
    <property type="entry name" value="ACETYL-COENZYME A CARBOXYLASE CARBOXYL TRANSFERASE SUBUNIT BETA, CHLOROPLASTIC"/>
    <property type="match status" value="1"/>
</dbReference>
<dbReference type="Pfam" id="PF01039">
    <property type="entry name" value="Carboxyl_trans"/>
    <property type="match status" value="1"/>
</dbReference>
<dbReference type="Pfam" id="PF17848">
    <property type="entry name" value="Zn_ribbon_ACC"/>
    <property type="match status" value="1"/>
</dbReference>
<dbReference type="PRINTS" id="PR01070">
    <property type="entry name" value="ACCCTRFRASEB"/>
</dbReference>
<dbReference type="SUPFAM" id="SSF52096">
    <property type="entry name" value="ClpP/crotonase"/>
    <property type="match status" value="1"/>
</dbReference>
<dbReference type="PROSITE" id="PS50980">
    <property type="entry name" value="COA_CT_NTER"/>
    <property type="match status" value="1"/>
</dbReference>
<name>ACCD_GLUDA</name>
<protein>
    <recommendedName>
        <fullName evidence="1">Acetyl-coenzyme A carboxylase carboxyl transferase subunit beta</fullName>
        <shortName evidence="1">ACCase subunit beta</shortName>
        <shortName evidence="1">Acetyl-CoA carboxylase carboxyltransferase subunit beta</shortName>
        <ecNumber evidence="1">2.1.3.15</ecNumber>
    </recommendedName>
</protein>
<accession>A9HE81</accession>
<accession>B5ZCR6</accession>
<organism>
    <name type="scientific">Gluconacetobacter diazotrophicus (strain ATCC 49037 / DSM 5601 / CCUG 37298 / CIP 103539 / LMG 7603 / PAl5)</name>
    <dbReference type="NCBI Taxonomy" id="272568"/>
    <lineage>
        <taxon>Bacteria</taxon>
        <taxon>Pseudomonadati</taxon>
        <taxon>Pseudomonadota</taxon>
        <taxon>Alphaproteobacteria</taxon>
        <taxon>Acetobacterales</taxon>
        <taxon>Acetobacteraceae</taxon>
        <taxon>Gluconacetobacter</taxon>
    </lineage>
</organism>
<feature type="chain" id="PRO_0000389749" description="Acetyl-coenzyme A carboxylase carboxyl transferase subunit beta">
    <location>
        <begin position="1"/>
        <end position="300"/>
    </location>
</feature>
<feature type="domain" description="CoA carboxyltransferase N-terminal" evidence="2">
    <location>
        <begin position="24"/>
        <end position="293"/>
    </location>
</feature>
<feature type="zinc finger region" description="C4-type" evidence="1">
    <location>
        <begin position="28"/>
        <end position="50"/>
    </location>
</feature>
<feature type="binding site" evidence="1">
    <location>
        <position position="28"/>
    </location>
    <ligand>
        <name>Zn(2+)</name>
        <dbReference type="ChEBI" id="CHEBI:29105"/>
    </ligand>
</feature>
<feature type="binding site" evidence="1">
    <location>
        <position position="31"/>
    </location>
    <ligand>
        <name>Zn(2+)</name>
        <dbReference type="ChEBI" id="CHEBI:29105"/>
    </ligand>
</feature>
<feature type="binding site" evidence="1">
    <location>
        <position position="47"/>
    </location>
    <ligand>
        <name>Zn(2+)</name>
        <dbReference type="ChEBI" id="CHEBI:29105"/>
    </ligand>
</feature>
<feature type="binding site" evidence="1">
    <location>
        <position position="50"/>
    </location>
    <ligand>
        <name>Zn(2+)</name>
        <dbReference type="ChEBI" id="CHEBI:29105"/>
    </ligand>
</feature>
<evidence type="ECO:0000255" key="1">
    <source>
        <dbReference type="HAMAP-Rule" id="MF_01395"/>
    </source>
</evidence>
<evidence type="ECO:0000255" key="2">
    <source>
        <dbReference type="PROSITE-ProRule" id="PRU01136"/>
    </source>
</evidence>
<evidence type="ECO:0000305" key="3"/>
<sequence length="300" mass="32820">MSWLTEYVRPKIRGLLKREVPDNLWTNCESCSQMILVKDLQKAMNVCPHCGHHMRASVAERFGWTFDEGTFTRIELPKVPVDPLSFRDRKRYTERLKDERSKSQLDESMAVAHGRIGGHDAVVAVMAFEFIAGTMGAALGEAFLAAARLAILQKAPLVVFTASGGARMQEGMVSLMQMPRTTVAVQMLRDAGLPYIVVLTNPTTGGVTASFAMLGDVQISEPNALIGFAGQRVIEDTVREKLPEGFQRAEYLLDHGMIDMVVKRPALPEMLGRLIGLMNHRHVNAPGAALGGAAPVRPAA</sequence>
<reference key="1">
    <citation type="journal article" date="2009" name="BMC Genomics">
        <title>Complete genome sequence of the sugarcane nitrogen-fixing endophyte Gluconacetobacter diazotrophicus Pal5.</title>
        <authorList>
            <person name="Bertalan M."/>
            <person name="Albano R."/>
            <person name="de Padua V."/>
            <person name="Rouws L."/>
            <person name="Rojas C."/>
            <person name="Hemerly A."/>
            <person name="Teixeira K."/>
            <person name="Schwab S."/>
            <person name="Araujo J."/>
            <person name="Oliveira A."/>
            <person name="Franca L."/>
            <person name="Magalhaes V."/>
            <person name="Alqueres S."/>
            <person name="Cardoso A."/>
            <person name="Almeida W."/>
            <person name="Loureiro M.M."/>
            <person name="Nogueira E."/>
            <person name="Cidade D."/>
            <person name="Oliveira D."/>
            <person name="Simao T."/>
            <person name="Macedo J."/>
            <person name="Valadao A."/>
            <person name="Dreschsel M."/>
            <person name="Freitas F."/>
            <person name="Vidal M."/>
            <person name="Guedes H."/>
            <person name="Rodrigues E."/>
            <person name="Meneses C."/>
            <person name="Brioso P."/>
            <person name="Pozzer L."/>
            <person name="Figueiredo D."/>
            <person name="Montano H."/>
            <person name="Junior J."/>
            <person name="de Souza Filho G."/>
            <person name="Martin Quintana Flores V."/>
            <person name="Ferreira B."/>
            <person name="Branco A."/>
            <person name="Gonzalez P."/>
            <person name="Guillobel H."/>
            <person name="Lemos M."/>
            <person name="Seibel L."/>
            <person name="Macedo J."/>
            <person name="Alves-Ferreira M."/>
            <person name="Sachetto-Martins G."/>
            <person name="Coelho A."/>
            <person name="Santos E."/>
            <person name="Amaral G."/>
            <person name="Neves A."/>
            <person name="Pacheco A.B."/>
            <person name="Carvalho D."/>
            <person name="Lery L."/>
            <person name="Bisch P."/>
            <person name="Rossle S.C."/>
            <person name="Urmenyi T."/>
            <person name="Rael Pereira A."/>
            <person name="Silva R."/>
            <person name="Rondinelli E."/>
            <person name="von Kruger W."/>
            <person name="Martins O."/>
            <person name="Baldani J.I."/>
            <person name="Ferreira P.C."/>
        </authorList>
    </citation>
    <scope>NUCLEOTIDE SEQUENCE [LARGE SCALE GENOMIC DNA]</scope>
    <source>
        <strain>ATCC 49037 / DSM 5601 / CCUG 37298 / CIP 103539 / LMG 7603 / PAl5</strain>
    </source>
</reference>
<reference key="2">
    <citation type="journal article" date="2010" name="Stand. Genomic Sci.">
        <title>Two genome sequences of the same bacterial strain, Gluconacetobacter diazotrophicus PAl 5, suggest a new standard in genome sequence submission.</title>
        <authorList>
            <person name="Giongo A."/>
            <person name="Tyler H.L."/>
            <person name="Zipperer U.N."/>
            <person name="Triplett E.W."/>
        </authorList>
    </citation>
    <scope>NUCLEOTIDE SEQUENCE [LARGE SCALE GENOMIC DNA]</scope>
    <source>
        <strain>ATCC 49037 / DSM 5601 / CCUG 37298 / CIP 103539 / LMG 7603 / PAl5</strain>
    </source>
</reference>
<keyword id="KW-0067">ATP-binding</keyword>
<keyword id="KW-0963">Cytoplasm</keyword>
<keyword id="KW-0275">Fatty acid biosynthesis</keyword>
<keyword id="KW-0276">Fatty acid metabolism</keyword>
<keyword id="KW-0444">Lipid biosynthesis</keyword>
<keyword id="KW-0443">Lipid metabolism</keyword>
<keyword id="KW-0479">Metal-binding</keyword>
<keyword id="KW-0547">Nucleotide-binding</keyword>
<keyword id="KW-1185">Reference proteome</keyword>
<keyword id="KW-0808">Transferase</keyword>
<keyword id="KW-0862">Zinc</keyword>
<keyword id="KW-0863">Zinc-finger</keyword>
<comment type="function">
    <text evidence="1">Component of the acetyl coenzyme A carboxylase (ACC) complex. Biotin carboxylase (BC) catalyzes the carboxylation of biotin on its carrier protein (BCCP) and then the CO(2) group is transferred by the transcarboxylase to acetyl-CoA to form malonyl-CoA.</text>
</comment>
<comment type="catalytic activity">
    <reaction evidence="1">
        <text>N(6)-carboxybiotinyl-L-lysyl-[protein] + acetyl-CoA = N(6)-biotinyl-L-lysyl-[protein] + malonyl-CoA</text>
        <dbReference type="Rhea" id="RHEA:54728"/>
        <dbReference type="Rhea" id="RHEA-COMP:10505"/>
        <dbReference type="Rhea" id="RHEA-COMP:10506"/>
        <dbReference type="ChEBI" id="CHEBI:57288"/>
        <dbReference type="ChEBI" id="CHEBI:57384"/>
        <dbReference type="ChEBI" id="CHEBI:83144"/>
        <dbReference type="ChEBI" id="CHEBI:83145"/>
        <dbReference type="EC" id="2.1.3.15"/>
    </reaction>
</comment>
<comment type="cofactor">
    <cofactor evidence="1">
        <name>Zn(2+)</name>
        <dbReference type="ChEBI" id="CHEBI:29105"/>
    </cofactor>
    <text evidence="1">Binds 1 zinc ion per subunit.</text>
</comment>
<comment type="pathway">
    <text evidence="1">Lipid metabolism; malonyl-CoA biosynthesis; malonyl-CoA from acetyl-CoA: step 1/1.</text>
</comment>
<comment type="subunit">
    <text evidence="1">Acetyl-CoA carboxylase is a heterohexamer composed of biotin carboxyl carrier protein (AccB), biotin carboxylase (AccC) and two subunits each of ACCase subunit alpha (AccA) and ACCase subunit beta (AccD).</text>
</comment>
<comment type="subcellular location">
    <subcellularLocation>
        <location evidence="1">Cytoplasm</location>
    </subcellularLocation>
</comment>
<comment type="similarity">
    <text evidence="1">Belongs to the AccD/PCCB family.</text>
</comment>
<comment type="sequence caution" evidence="3">
    <conflict type="erroneous initiation">
        <sequence resource="EMBL-CDS" id="CAP55196"/>
    </conflict>
    <text>Extended N-terminus.</text>
</comment>
<gene>
    <name evidence="1" type="primary">accD</name>
    <name type="ordered locus">GDI1253</name>
    <name type="ordered locus">Gdia_1964</name>
</gene>